<name>PGPP1_CHLRE</name>
<accession>A0A2K3DU55</accession>
<gene>
    <name evidence="6" type="primary">PGPP1</name>
    <name evidence="6" type="synonym">Cre04.g219900</name>
    <name evidence="8" type="ORF">CHLRE_04g219900v5</name>
</gene>
<sequence length="269" mass="28620">MRSVPGPSPPCTRSLAHSCRAAARGPCGSARPRARSVSARAHSSEASDMARVQQNFNSAGVGLFFSLFGGNQSLALPHLAAPDIRHVDWRALKAAGFKGLVFDKDNTLSLPFALEVEPRLQPALAGCLEAFGGRAVLYSNSAGLQQYDPEGKEAAALEAALGIPVLRHADKKPGGGCAELEAHFGCPAPQLIMVGDRYLTDIAFGNRHGMLTVHVQPLTTSGEPFGVVMARRIEEFWVARWTSFGVHPPAHSLAPHDTLAAYVKDQPIA</sequence>
<reference key="1">
    <citation type="journal article" date="2007" name="Science">
        <title>The Chlamydomonas genome reveals the evolution of key animal and plant functions.</title>
        <authorList>
            <person name="Merchant S.S."/>
            <person name="Prochnik S.E."/>
            <person name="Vallon O."/>
            <person name="Harris E.H."/>
            <person name="Karpowicz S.J."/>
            <person name="Witman G.B."/>
            <person name="Terry A."/>
            <person name="Salamov A."/>
            <person name="Fritz-Laylin L.K."/>
            <person name="Marechal-Drouard L."/>
            <person name="Marshall W.F."/>
            <person name="Qu L.H."/>
            <person name="Nelson D.R."/>
            <person name="Sanderfoot A.A."/>
            <person name="Spalding M.H."/>
            <person name="Kapitonov V.V."/>
            <person name="Ren Q."/>
            <person name="Ferris P."/>
            <person name="Lindquist E."/>
            <person name="Shapiro H."/>
            <person name="Lucas S.M."/>
            <person name="Grimwood J."/>
            <person name="Schmutz J."/>
            <person name="Cardol P."/>
            <person name="Cerutti H."/>
            <person name="Chanfreau G."/>
            <person name="Chen C.L."/>
            <person name="Cognat V."/>
            <person name="Croft M.T."/>
            <person name="Dent R."/>
            <person name="Dutcher S."/>
            <person name="Fernandez E."/>
            <person name="Fukuzawa H."/>
            <person name="Gonzalez-Ballester D."/>
            <person name="Gonzalez-Halphen D."/>
            <person name="Hallmann A."/>
            <person name="Hanikenne M."/>
            <person name="Hippler M."/>
            <person name="Inwood W."/>
            <person name="Jabbari K."/>
            <person name="Kalanon M."/>
            <person name="Kuras R."/>
            <person name="Lefebvre P.A."/>
            <person name="Lemaire S.D."/>
            <person name="Lobanov A.V."/>
            <person name="Lohr M."/>
            <person name="Manuell A."/>
            <person name="Meier I."/>
            <person name="Mets L."/>
            <person name="Mittag M."/>
            <person name="Mittelmeier T."/>
            <person name="Moroney J.V."/>
            <person name="Moseley J."/>
            <person name="Napoli C."/>
            <person name="Nedelcu A.M."/>
            <person name="Niyogi K."/>
            <person name="Novoselov S.V."/>
            <person name="Paulsen I.T."/>
            <person name="Pazour G.J."/>
            <person name="Purton S."/>
            <person name="Ral J.P."/>
            <person name="Riano-Pachon D.M."/>
            <person name="Riekhof W."/>
            <person name="Rymarquis L."/>
            <person name="Schroda M."/>
            <person name="Stern D."/>
            <person name="Umen J."/>
            <person name="Willows R."/>
            <person name="Wilson N."/>
            <person name="Zimmer S.L."/>
            <person name="Allmer J."/>
            <person name="Balk J."/>
            <person name="Bisova K."/>
            <person name="Chen C.J."/>
            <person name="Elias M."/>
            <person name="Gendler K."/>
            <person name="Hauser C."/>
            <person name="Lamb M.R."/>
            <person name="Ledford H."/>
            <person name="Long J.C."/>
            <person name="Minagawa J."/>
            <person name="Page M.D."/>
            <person name="Pan J."/>
            <person name="Pootakham W."/>
            <person name="Roje S."/>
            <person name="Rose A."/>
            <person name="Stahlberg E."/>
            <person name="Terauchi A.M."/>
            <person name="Yang P."/>
            <person name="Ball S."/>
            <person name="Bowler C."/>
            <person name="Dieckmann C.L."/>
            <person name="Gladyshev V.N."/>
            <person name="Green P."/>
            <person name="Jorgensen R."/>
            <person name="Mayfield S."/>
            <person name="Mueller-Roeber B."/>
            <person name="Rajamani S."/>
            <person name="Sayre R.T."/>
            <person name="Brokstein P."/>
            <person name="Dubchak I."/>
            <person name="Goodstein D."/>
            <person name="Hornick L."/>
            <person name="Huang Y.W."/>
            <person name="Jhaveri J."/>
            <person name="Luo Y."/>
            <person name="Martinez D."/>
            <person name="Ngau W.C."/>
            <person name="Otillar B."/>
            <person name="Poliakov A."/>
            <person name="Porter A."/>
            <person name="Szajkowski L."/>
            <person name="Werner G."/>
            <person name="Zhou K."/>
            <person name="Grigoriev I.V."/>
            <person name="Rokhsar D.S."/>
            <person name="Grossman A.R."/>
        </authorList>
    </citation>
    <scope>NUCLEOTIDE SEQUENCE [LARGE SCALE GENOMIC DNA]</scope>
    <source>
        <strain>CC-503</strain>
    </source>
</reference>
<reference key="2">
    <citation type="journal article" date="2015" name="Plant Physiol. Biochem.">
        <title>Isolation and characterization of a phosphatidylglycerophosphate phosphatase1, PGPP1, in Chlamydomonas reinhardtii.</title>
        <authorList>
            <person name="Hung C.-H."/>
            <person name="Kobayashi K."/>
            <person name="Wada H."/>
            <person name="Nakamura Y."/>
        </authorList>
    </citation>
    <scope>FUNCTION</scope>
    <scope>MUTAGENESIS OF ASP-103 AND ASP-105</scope>
    <scope>CATALYTIC ACTIVITY</scope>
    <scope>PATHWAY</scope>
</reference>
<comment type="function">
    <text evidence="2 5">Phosphatidylglycerophosphate phosphatase involved in the biosynthesis of phosphatidylglycerol (PG), a phosphoglycerolipid predominantly present in chloroplastic thylakoid membranes and which has important photosynthetic function (PubMed:25910650). Required for thylakoid membranes development and chloroplast function (By similarity).</text>
</comment>
<comment type="catalytic activity">
    <reaction evidence="5">
        <text>a 1,2-diacyl-sn-glycero-3-phospho-(1'-sn-glycero-3'-phosphate) + H2O = a 1,2-diacyl-sn-glycero-3-phospho-(1'-sn-glycerol) + phosphate</text>
        <dbReference type="Rhea" id="RHEA:33751"/>
        <dbReference type="ChEBI" id="CHEBI:15377"/>
        <dbReference type="ChEBI" id="CHEBI:43474"/>
        <dbReference type="ChEBI" id="CHEBI:60110"/>
        <dbReference type="ChEBI" id="CHEBI:64716"/>
        <dbReference type="EC" id="3.1.3.27"/>
    </reaction>
    <physiologicalReaction direction="left-to-right" evidence="5">
        <dbReference type="Rhea" id="RHEA:33752"/>
    </physiologicalReaction>
</comment>
<comment type="pathway">
    <text evidence="5">Phospholipid metabolism; phosphatidylglycerol biosynthesis; phosphatidylglycerol from CDP-diacylglycerol: step 2/2.</text>
</comment>
<comment type="subcellular location">
    <subcellularLocation>
        <location evidence="3">Plastid</location>
        <location evidence="3">Chloroplast</location>
    </subcellularLocation>
</comment>
<comment type="similarity">
    <text evidence="7">Belongs to the HAD-like hydrolase superfamily.</text>
</comment>
<dbReference type="EC" id="3.1.3.27" evidence="5"/>
<dbReference type="EMBL" id="CM008965">
    <property type="protein sequence ID" value="PNW84070.1"/>
    <property type="molecule type" value="Genomic_DNA"/>
</dbReference>
<dbReference type="FunCoup" id="A0A2K3DU55">
    <property type="interactions" value="162"/>
</dbReference>
<dbReference type="STRING" id="3055.A0A2K3DU55"/>
<dbReference type="PaxDb" id="3055-EDP04115"/>
<dbReference type="EnsemblPlants" id="PNW84070">
    <property type="protein sequence ID" value="PNW84070"/>
    <property type="gene ID" value="CHLRE_04g219900v5"/>
</dbReference>
<dbReference type="Gramene" id="PNW84070">
    <property type="protein sequence ID" value="PNW84070"/>
    <property type="gene ID" value="CHLRE_04g219900v5"/>
</dbReference>
<dbReference type="InParanoid" id="A0A2K3DU55"/>
<dbReference type="OMA" id="PDCQQCV"/>
<dbReference type="OrthoDB" id="198652at2759"/>
<dbReference type="UniPathway" id="UPA00084">
    <property type="reaction ID" value="UER00504"/>
</dbReference>
<dbReference type="Proteomes" id="UP000006906">
    <property type="component" value="Chromosome 4"/>
</dbReference>
<dbReference type="ExpressionAtlas" id="A0A2K3DU55">
    <property type="expression patterns" value="baseline and differential"/>
</dbReference>
<dbReference type="GO" id="GO:0009507">
    <property type="term" value="C:chloroplast"/>
    <property type="evidence" value="ECO:0000250"/>
    <property type="project" value="UniProtKB"/>
</dbReference>
<dbReference type="GO" id="GO:0005737">
    <property type="term" value="C:cytoplasm"/>
    <property type="evidence" value="ECO:0000318"/>
    <property type="project" value="GO_Central"/>
</dbReference>
<dbReference type="GO" id="GO:0016791">
    <property type="term" value="F:phosphatase activity"/>
    <property type="evidence" value="ECO:0000318"/>
    <property type="project" value="GO_Central"/>
</dbReference>
<dbReference type="GO" id="GO:0008962">
    <property type="term" value="F:phosphatidylglycerophosphatase activity"/>
    <property type="evidence" value="ECO:0000314"/>
    <property type="project" value="UniProtKB"/>
</dbReference>
<dbReference type="GO" id="GO:0009658">
    <property type="term" value="P:chloroplast organization"/>
    <property type="evidence" value="ECO:0000250"/>
    <property type="project" value="UniProtKB"/>
</dbReference>
<dbReference type="GO" id="GO:0046486">
    <property type="term" value="P:glycerolipid metabolic process"/>
    <property type="evidence" value="ECO:0000314"/>
    <property type="project" value="UniProtKB"/>
</dbReference>
<dbReference type="GO" id="GO:0006655">
    <property type="term" value="P:phosphatidylglycerol biosynthetic process"/>
    <property type="evidence" value="ECO:0007669"/>
    <property type="project" value="UniProtKB-UniPathway"/>
</dbReference>
<dbReference type="GO" id="GO:0046839">
    <property type="term" value="P:phospholipid dephosphorylation"/>
    <property type="evidence" value="ECO:0000314"/>
    <property type="project" value="UniProtKB"/>
</dbReference>
<dbReference type="GO" id="GO:0015979">
    <property type="term" value="P:photosynthesis"/>
    <property type="evidence" value="ECO:0000250"/>
    <property type="project" value="UniProtKB"/>
</dbReference>
<dbReference type="GO" id="GO:0010027">
    <property type="term" value="P:thylakoid membrane organization"/>
    <property type="evidence" value="ECO:0000250"/>
    <property type="project" value="UniProtKB"/>
</dbReference>
<dbReference type="FunFam" id="3.40.50.1000:FF:000387">
    <property type="entry name" value="Predicted protein"/>
    <property type="match status" value="1"/>
</dbReference>
<dbReference type="Gene3D" id="3.40.50.1000">
    <property type="entry name" value="HAD superfamily/HAD-like"/>
    <property type="match status" value="1"/>
</dbReference>
<dbReference type="InterPro" id="IPR036412">
    <property type="entry name" value="HAD-like_sf"/>
</dbReference>
<dbReference type="InterPro" id="IPR023214">
    <property type="entry name" value="HAD_sf"/>
</dbReference>
<dbReference type="InterPro" id="IPR027706">
    <property type="entry name" value="PGP_Pase"/>
</dbReference>
<dbReference type="InterPro" id="IPR010021">
    <property type="entry name" value="PGPP1/Gep4"/>
</dbReference>
<dbReference type="NCBIfam" id="TIGR01668">
    <property type="entry name" value="YqeG_hyp_ppase"/>
    <property type="match status" value="1"/>
</dbReference>
<dbReference type="PANTHER" id="PTHR19288">
    <property type="entry name" value="4-NITROPHENYLPHOSPHATASE-RELATED"/>
    <property type="match status" value="1"/>
</dbReference>
<dbReference type="PANTHER" id="PTHR19288:SF25">
    <property type="entry name" value="PHOSPHATIDYLGLYCEROPHOSPHATASE GEP4, MITOCHONDRIAL"/>
    <property type="match status" value="1"/>
</dbReference>
<dbReference type="Pfam" id="PF09419">
    <property type="entry name" value="PGP_phosphatase"/>
    <property type="match status" value="1"/>
</dbReference>
<dbReference type="SUPFAM" id="SSF56784">
    <property type="entry name" value="HAD-like"/>
    <property type="match status" value="1"/>
</dbReference>
<evidence type="ECO:0000250" key="1">
    <source>
        <dbReference type="UniProtKB" id="P38812"/>
    </source>
</evidence>
<evidence type="ECO:0000250" key="2">
    <source>
        <dbReference type="UniProtKB" id="Q9LXR9"/>
    </source>
</evidence>
<evidence type="ECO:0000255" key="3"/>
<evidence type="ECO:0000256" key="4">
    <source>
        <dbReference type="SAM" id="MobiDB-lite"/>
    </source>
</evidence>
<evidence type="ECO:0000269" key="5">
    <source>
    </source>
</evidence>
<evidence type="ECO:0000303" key="6">
    <source>
    </source>
</evidence>
<evidence type="ECO:0000305" key="7"/>
<evidence type="ECO:0000312" key="8">
    <source>
        <dbReference type="EMBL" id="PNW84070.1"/>
    </source>
</evidence>
<keyword id="KW-0150">Chloroplast</keyword>
<keyword id="KW-0378">Hydrolase</keyword>
<keyword id="KW-0444">Lipid biosynthesis</keyword>
<keyword id="KW-0443">Lipid metabolism</keyword>
<keyword id="KW-0594">Phospholipid biosynthesis</keyword>
<keyword id="KW-1208">Phospholipid metabolism</keyword>
<keyword id="KW-0934">Plastid</keyword>
<keyword id="KW-1185">Reference proteome</keyword>
<keyword id="KW-0809">Transit peptide</keyword>
<protein>
    <recommendedName>
        <fullName evidence="6">Phosphatidylglycerophosphate phosphatase 1, chloroplastic</fullName>
        <shortName evidence="6">CrPGPP1</shortName>
        <shortName evidence="6">PGP phosphatase 1</shortName>
        <ecNumber evidence="5">3.1.3.27</ecNumber>
    </recommendedName>
</protein>
<proteinExistence type="evidence at protein level"/>
<organism>
    <name type="scientific">Chlamydomonas reinhardtii</name>
    <name type="common">Chlamydomonas smithii</name>
    <dbReference type="NCBI Taxonomy" id="3055"/>
    <lineage>
        <taxon>Eukaryota</taxon>
        <taxon>Viridiplantae</taxon>
        <taxon>Chlorophyta</taxon>
        <taxon>core chlorophytes</taxon>
        <taxon>Chlorophyceae</taxon>
        <taxon>CS clade</taxon>
        <taxon>Chlamydomonadales</taxon>
        <taxon>Chlamydomonadaceae</taxon>
        <taxon>Chlamydomonas</taxon>
    </lineage>
</organism>
<feature type="transit peptide" description="Chloroplast" evidence="3">
    <location>
        <begin position="1"/>
        <end position="33"/>
    </location>
</feature>
<feature type="chain" id="PRO_0000449814" description="Phosphatidylglycerophosphate phosphatase 1, chloroplastic">
    <location>
        <begin position="34"/>
        <end position="269"/>
    </location>
</feature>
<feature type="region of interest" description="Disordered" evidence="4">
    <location>
        <begin position="25"/>
        <end position="46"/>
    </location>
</feature>
<feature type="short sequence motif" description="Phosphoryl acceptor" evidence="1">
    <location>
        <begin position="103"/>
        <end position="107"/>
    </location>
</feature>
<feature type="compositionally biased region" description="Low complexity" evidence="4">
    <location>
        <begin position="29"/>
        <end position="46"/>
    </location>
</feature>
<feature type="site" description="Required for phosphatidylglycerophosphate phosphatase activity" evidence="5">
    <location>
        <position position="103"/>
    </location>
</feature>
<feature type="mutagenesis site" description="Disturbed phosphatidylglycerophosphate phosphatase activity. Impaired phosphatidylglycerophosphate phosphatase activity; when associated with N-105." evidence="5">
    <original>D</original>
    <variation>N</variation>
    <location>
        <position position="103"/>
    </location>
</feature>
<feature type="mutagenesis site" description="Normal phosphatidylglycerophosphate phosphatase activity. Impaired phosphatidylglycerophosphate phosphatase activity; when associated with N-103." evidence="5">
    <original>D</original>
    <variation>N</variation>
    <location>
        <position position="105"/>
    </location>
</feature>